<protein>
    <recommendedName>
        <fullName evidence="1">Ribosomal RNA large subunit methyltransferase H</fullName>
        <ecNumber evidence="1">2.1.1.177</ecNumber>
    </recommendedName>
    <alternativeName>
        <fullName evidence="1">23S rRNA (pseudouridine1915-N3)-methyltransferase</fullName>
    </alternativeName>
    <alternativeName>
        <fullName evidence="1">23S rRNA m3Psi1915 methyltransferase</fullName>
    </alternativeName>
    <alternativeName>
        <fullName evidence="1">rRNA (pseudouridine-N3-)-methyltransferase RlmH</fullName>
    </alternativeName>
</protein>
<organism>
    <name type="scientific">Xylella fastidiosa (strain M12)</name>
    <dbReference type="NCBI Taxonomy" id="405440"/>
    <lineage>
        <taxon>Bacteria</taxon>
        <taxon>Pseudomonadati</taxon>
        <taxon>Pseudomonadota</taxon>
        <taxon>Gammaproteobacteria</taxon>
        <taxon>Lysobacterales</taxon>
        <taxon>Lysobacteraceae</taxon>
        <taxon>Xylella</taxon>
    </lineage>
</organism>
<accession>B0U4I5</accession>
<sequence length="157" mass="18005">MKCLLIATGERVPTWVAQGFAEYHRRLSYWLPLELVEIEPSMRGKNHDPQRAIEDEGRRVMAALPKQPYAVTLDVKGKPLNSEQLAQRMEHWRGLGRNLVFLIGGPEGHSQEVLNISNERWSLGPLTLPHMLVRLIVVEQLYRAATILTNHPYHRGK</sequence>
<dbReference type="EC" id="2.1.1.177" evidence="1"/>
<dbReference type="EMBL" id="CP000941">
    <property type="protein sequence ID" value="ACA12764.1"/>
    <property type="molecule type" value="Genomic_DNA"/>
</dbReference>
<dbReference type="RefSeq" id="WP_004086621.1">
    <property type="nucleotide sequence ID" value="NC_010513.1"/>
</dbReference>
<dbReference type="SMR" id="B0U4I5"/>
<dbReference type="KEGG" id="xfm:Xfasm12_1884"/>
<dbReference type="HOGENOM" id="CLU_100552_1_0_6"/>
<dbReference type="GO" id="GO:0005737">
    <property type="term" value="C:cytoplasm"/>
    <property type="evidence" value="ECO:0007669"/>
    <property type="project" value="UniProtKB-SubCell"/>
</dbReference>
<dbReference type="GO" id="GO:0070038">
    <property type="term" value="F:rRNA (pseudouridine-N3-)-methyltransferase activity"/>
    <property type="evidence" value="ECO:0007669"/>
    <property type="project" value="UniProtKB-UniRule"/>
</dbReference>
<dbReference type="CDD" id="cd18081">
    <property type="entry name" value="RlmH-like"/>
    <property type="match status" value="1"/>
</dbReference>
<dbReference type="Gene3D" id="3.40.1280.10">
    <property type="match status" value="1"/>
</dbReference>
<dbReference type="HAMAP" id="MF_00658">
    <property type="entry name" value="23SrRNA_methyltr_H"/>
    <property type="match status" value="1"/>
</dbReference>
<dbReference type="InterPro" id="IPR029028">
    <property type="entry name" value="Alpha/beta_knot_MTases"/>
</dbReference>
<dbReference type="InterPro" id="IPR003742">
    <property type="entry name" value="RlmH-like"/>
</dbReference>
<dbReference type="InterPro" id="IPR029026">
    <property type="entry name" value="tRNA_m1G_MTases_N"/>
</dbReference>
<dbReference type="NCBIfam" id="NF000986">
    <property type="entry name" value="PRK00103.1-4"/>
    <property type="match status" value="1"/>
</dbReference>
<dbReference type="NCBIfam" id="TIGR00246">
    <property type="entry name" value="tRNA_RlmH_YbeA"/>
    <property type="match status" value="1"/>
</dbReference>
<dbReference type="PANTHER" id="PTHR33603">
    <property type="entry name" value="METHYLTRANSFERASE"/>
    <property type="match status" value="1"/>
</dbReference>
<dbReference type="PANTHER" id="PTHR33603:SF1">
    <property type="entry name" value="RIBOSOMAL RNA LARGE SUBUNIT METHYLTRANSFERASE H"/>
    <property type="match status" value="1"/>
</dbReference>
<dbReference type="Pfam" id="PF02590">
    <property type="entry name" value="SPOUT_MTase"/>
    <property type="match status" value="1"/>
</dbReference>
<dbReference type="PIRSF" id="PIRSF004505">
    <property type="entry name" value="MT_bac"/>
    <property type="match status" value="1"/>
</dbReference>
<dbReference type="SUPFAM" id="SSF75217">
    <property type="entry name" value="alpha/beta knot"/>
    <property type="match status" value="1"/>
</dbReference>
<name>RLMH_XYLFM</name>
<feature type="chain" id="PRO_0000366678" description="Ribosomal RNA large subunit methyltransferase H">
    <location>
        <begin position="1"/>
        <end position="157"/>
    </location>
</feature>
<feature type="binding site" evidence="1">
    <location>
        <position position="73"/>
    </location>
    <ligand>
        <name>S-adenosyl-L-methionine</name>
        <dbReference type="ChEBI" id="CHEBI:59789"/>
    </ligand>
</feature>
<feature type="binding site" evidence="1">
    <location>
        <position position="104"/>
    </location>
    <ligand>
        <name>S-adenosyl-L-methionine</name>
        <dbReference type="ChEBI" id="CHEBI:59789"/>
    </ligand>
</feature>
<feature type="binding site" evidence="1">
    <location>
        <begin position="123"/>
        <end position="128"/>
    </location>
    <ligand>
        <name>S-adenosyl-L-methionine</name>
        <dbReference type="ChEBI" id="CHEBI:59789"/>
    </ligand>
</feature>
<proteinExistence type="inferred from homology"/>
<keyword id="KW-0963">Cytoplasm</keyword>
<keyword id="KW-0489">Methyltransferase</keyword>
<keyword id="KW-0698">rRNA processing</keyword>
<keyword id="KW-0949">S-adenosyl-L-methionine</keyword>
<keyword id="KW-0808">Transferase</keyword>
<comment type="function">
    <text evidence="1">Specifically methylates the pseudouridine at position 1915 (m3Psi1915) in 23S rRNA.</text>
</comment>
<comment type="catalytic activity">
    <reaction evidence="1">
        <text>pseudouridine(1915) in 23S rRNA + S-adenosyl-L-methionine = N(3)-methylpseudouridine(1915) in 23S rRNA + S-adenosyl-L-homocysteine + H(+)</text>
        <dbReference type="Rhea" id="RHEA:42752"/>
        <dbReference type="Rhea" id="RHEA-COMP:10221"/>
        <dbReference type="Rhea" id="RHEA-COMP:10222"/>
        <dbReference type="ChEBI" id="CHEBI:15378"/>
        <dbReference type="ChEBI" id="CHEBI:57856"/>
        <dbReference type="ChEBI" id="CHEBI:59789"/>
        <dbReference type="ChEBI" id="CHEBI:65314"/>
        <dbReference type="ChEBI" id="CHEBI:74486"/>
        <dbReference type="EC" id="2.1.1.177"/>
    </reaction>
</comment>
<comment type="subunit">
    <text evidence="1">Homodimer.</text>
</comment>
<comment type="subcellular location">
    <subcellularLocation>
        <location evidence="1">Cytoplasm</location>
    </subcellularLocation>
</comment>
<comment type="similarity">
    <text evidence="1">Belongs to the RNA methyltransferase RlmH family.</text>
</comment>
<gene>
    <name evidence="1" type="primary">rlmH</name>
    <name type="ordered locus">Xfasm12_1884</name>
</gene>
<reference key="1">
    <citation type="journal article" date="2010" name="J. Bacteriol.">
        <title>Whole genome sequences of two Xylella fastidiosa strains (M12 and M23) causing almond leaf scorch disease in California.</title>
        <authorList>
            <person name="Chen J."/>
            <person name="Xie G."/>
            <person name="Han S."/>
            <person name="Chertkov O."/>
            <person name="Sims D."/>
            <person name="Civerolo E.L."/>
        </authorList>
    </citation>
    <scope>NUCLEOTIDE SEQUENCE [LARGE SCALE GENOMIC DNA]</scope>
    <source>
        <strain>M12</strain>
    </source>
</reference>
<evidence type="ECO:0000255" key="1">
    <source>
        <dbReference type="HAMAP-Rule" id="MF_00658"/>
    </source>
</evidence>